<gene>
    <name evidence="1" type="primary">yciB</name>
    <name type="ordered locus">H16_A1516</name>
</gene>
<organism>
    <name type="scientific">Cupriavidus necator (strain ATCC 17699 / DSM 428 / KCTC 22496 / NCIMB 10442 / H16 / Stanier 337)</name>
    <name type="common">Ralstonia eutropha</name>
    <dbReference type="NCBI Taxonomy" id="381666"/>
    <lineage>
        <taxon>Bacteria</taxon>
        <taxon>Pseudomonadati</taxon>
        <taxon>Pseudomonadota</taxon>
        <taxon>Betaproteobacteria</taxon>
        <taxon>Burkholderiales</taxon>
        <taxon>Burkholderiaceae</taxon>
        <taxon>Cupriavidus</taxon>
    </lineage>
</organism>
<comment type="function">
    <text evidence="1">Plays a role in cell envelope biogenesis, maintenance of cell envelope integrity and membrane homeostasis.</text>
</comment>
<comment type="subcellular location">
    <subcellularLocation>
        <location evidence="1">Cell inner membrane</location>
        <topology evidence="1">Multi-pass membrane protein</topology>
    </subcellularLocation>
</comment>
<comment type="similarity">
    <text evidence="1">Belongs to the YciB family.</text>
</comment>
<reference key="1">
    <citation type="journal article" date="2006" name="Nat. Biotechnol.">
        <title>Genome sequence of the bioplastic-producing 'Knallgas' bacterium Ralstonia eutropha H16.</title>
        <authorList>
            <person name="Pohlmann A."/>
            <person name="Fricke W.F."/>
            <person name="Reinecke F."/>
            <person name="Kusian B."/>
            <person name="Liesegang H."/>
            <person name="Cramm R."/>
            <person name="Eitinger T."/>
            <person name="Ewering C."/>
            <person name="Poetter M."/>
            <person name="Schwartz E."/>
            <person name="Strittmatter A."/>
            <person name="Voss I."/>
            <person name="Gottschalk G."/>
            <person name="Steinbuechel A."/>
            <person name="Friedrich B."/>
            <person name="Bowien B."/>
        </authorList>
    </citation>
    <scope>NUCLEOTIDE SEQUENCE [LARGE SCALE GENOMIC DNA]</scope>
    <source>
        <strain>ATCC 17699 / DSM 428 / KCTC 22496 / NCIMB 10442 / H16 / Stanier 337</strain>
    </source>
</reference>
<name>YCIB_CUPNH</name>
<dbReference type="EMBL" id="AM260479">
    <property type="protein sequence ID" value="CAJ92648.1"/>
    <property type="molecule type" value="Genomic_DNA"/>
</dbReference>
<dbReference type="RefSeq" id="WP_010810056.1">
    <property type="nucleotide sequence ID" value="NZ_CP039287.1"/>
</dbReference>
<dbReference type="STRING" id="381666.H16_A1516"/>
<dbReference type="KEGG" id="reh:H16_A1516"/>
<dbReference type="eggNOG" id="COG2917">
    <property type="taxonomic scope" value="Bacteria"/>
</dbReference>
<dbReference type="HOGENOM" id="CLU_089554_2_0_4"/>
<dbReference type="OrthoDB" id="9788219at2"/>
<dbReference type="Proteomes" id="UP000008210">
    <property type="component" value="Chromosome 1"/>
</dbReference>
<dbReference type="GO" id="GO:0005886">
    <property type="term" value="C:plasma membrane"/>
    <property type="evidence" value="ECO:0007669"/>
    <property type="project" value="UniProtKB-SubCell"/>
</dbReference>
<dbReference type="HAMAP" id="MF_00189">
    <property type="entry name" value="YciB"/>
    <property type="match status" value="1"/>
</dbReference>
<dbReference type="InterPro" id="IPR006008">
    <property type="entry name" value="YciB"/>
</dbReference>
<dbReference type="NCBIfam" id="TIGR00997">
    <property type="entry name" value="ispZ"/>
    <property type="match status" value="1"/>
</dbReference>
<dbReference type="NCBIfam" id="NF001324">
    <property type="entry name" value="PRK00259.1-2"/>
    <property type="match status" value="1"/>
</dbReference>
<dbReference type="NCBIfam" id="NF001325">
    <property type="entry name" value="PRK00259.1-3"/>
    <property type="match status" value="1"/>
</dbReference>
<dbReference type="PANTHER" id="PTHR36917:SF1">
    <property type="entry name" value="INNER MEMBRANE-SPANNING PROTEIN YCIB"/>
    <property type="match status" value="1"/>
</dbReference>
<dbReference type="PANTHER" id="PTHR36917">
    <property type="entry name" value="INTRACELLULAR SEPTATION PROTEIN A-RELATED"/>
    <property type="match status" value="1"/>
</dbReference>
<dbReference type="Pfam" id="PF04279">
    <property type="entry name" value="IspA"/>
    <property type="match status" value="1"/>
</dbReference>
<feature type="chain" id="PRO_1000021047" description="Inner membrane-spanning protein YciB">
    <location>
        <begin position="1"/>
        <end position="179"/>
    </location>
</feature>
<feature type="transmembrane region" description="Helical" evidence="1">
    <location>
        <begin position="3"/>
        <end position="23"/>
    </location>
</feature>
<feature type="transmembrane region" description="Helical" evidence="1">
    <location>
        <begin position="24"/>
        <end position="44"/>
    </location>
</feature>
<feature type="transmembrane region" description="Helical" evidence="1">
    <location>
        <begin position="49"/>
        <end position="69"/>
    </location>
</feature>
<feature type="transmembrane region" description="Helical" evidence="1">
    <location>
        <begin position="76"/>
        <end position="96"/>
    </location>
</feature>
<feature type="transmembrane region" description="Helical" evidence="1">
    <location>
        <begin position="121"/>
        <end position="141"/>
    </location>
</feature>
<feature type="transmembrane region" description="Helical" evidence="1">
    <location>
        <begin position="149"/>
        <end position="169"/>
    </location>
</feature>
<proteinExistence type="inferred from homology"/>
<keyword id="KW-0997">Cell inner membrane</keyword>
<keyword id="KW-1003">Cell membrane</keyword>
<keyword id="KW-0472">Membrane</keyword>
<keyword id="KW-1185">Reference proteome</keyword>
<keyword id="KW-0812">Transmembrane</keyword>
<keyword id="KW-1133">Transmembrane helix</keyword>
<sequence length="179" mass="20443">MKFLFDLFPVILFFAAFKLADIYTATAVAIGATVLQIGWVWFRHRKVEPMQWVSLLIIAVFGGATLVLHNETFIKWKPTVLYWMFAVGLLGSVIGWRKNLIRAMMEKQVTLPDPVWARLNAAWAGFFAAMGVLNLYVAYQFSTEAWVNFKLFGSMGLMLVFIVAQSVWLSRHMPENSQD</sequence>
<evidence type="ECO:0000255" key="1">
    <source>
        <dbReference type="HAMAP-Rule" id="MF_00189"/>
    </source>
</evidence>
<protein>
    <recommendedName>
        <fullName evidence="1">Inner membrane-spanning protein YciB</fullName>
    </recommendedName>
</protein>
<accession>Q0KBH3</accession>